<dbReference type="EMBL" id="CR767821">
    <property type="protein sequence ID" value="CAH57962.1"/>
    <property type="molecule type" value="Genomic_DNA"/>
</dbReference>
<dbReference type="EMBL" id="CR925678">
    <property type="protein sequence ID" value="CAI26743.1"/>
    <property type="molecule type" value="Genomic_DNA"/>
</dbReference>
<dbReference type="RefSeq" id="WP_011154929.1">
    <property type="nucleotide sequence ID" value="NC_005295.2"/>
</dbReference>
<dbReference type="SMR" id="Q5HBT2"/>
<dbReference type="GeneID" id="33058321"/>
<dbReference type="KEGG" id="eru:Erum2450"/>
<dbReference type="KEGG" id="erw:ERWE_CDS_02490"/>
<dbReference type="eggNOG" id="COG0326">
    <property type="taxonomic scope" value="Bacteria"/>
</dbReference>
<dbReference type="HOGENOM" id="CLU_006684_3_0_5"/>
<dbReference type="Proteomes" id="UP000001021">
    <property type="component" value="Chromosome"/>
</dbReference>
<dbReference type="GO" id="GO:0005737">
    <property type="term" value="C:cytoplasm"/>
    <property type="evidence" value="ECO:0007669"/>
    <property type="project" value="UniProtKB-SubCell"/>
</dbReference>
<dbReference type="GO" id="GO:0005524">
    <property type="term" value="F:ATP binding"/>
    <property type="evidence" value="ECO:0007669"/>
    <property type="project" value="UniProtKB-UniRule"/>
</dbReference>
<dbReference type="GO" id="GO:0016887">
    <property type="term" value="F:ATP hydrolysis activity"/>
    <property type="evidence" value="ECO:0007669"/>
    <property type="project" value="InterPro"/>
</dbReference>
<dbReference type="GO" id="GO:0140662">
    <property type="term" value="F:ATP-dependent protein folding chaperone"/>
    <property type="evidence" value="ECO:0007669"/>
    <property type="project" value="InterPro"/>
</dbReference>
<dbReference type="GO" id="GO:0051082">
    <property type="term" value="F:unfolded protein binding"/>
    <property type="evidence" value="ECO:0007669"/>
    <property type="project" value="UniProtKB-UniRule"/>
</dbReference>
<dbReference type="CDD" id="cd16927">
    <property type="entry name" value="HATPase_Hsp90-like"/>
    <property type="match status" value="1"/>
</dbReference>
<dbReference type="FunFam" id="3.30.565.10:FF:000009">
    <property type="entry name" value="Molecular chaperone HtpG"/>
    <property type="match status" value="1"/>
</dbReference>
<dbReference type="Gene3D" id="3.30.230.80">
    <property type="match status" value="1"/>
</dbReference>
<dbReference type="Gene3D" id="3.40.50.11260">
    <property type="match status" value="1"/>
</dbReference>
<dbReference type="Gene3D" id="1.20.120.790">
    <property type="entry name" value="Heat shock protein 90, C-terminal domain"/>
    <property type="match status" value="1"/>
</dbReference>
<dbReference type="Gene3D" id="3.30.565.10">
    <property type="entry name" value="Histidine kinase-like ATPase, C-terminal domain"/>
    <property type="match status" value="1"/>
</dbReference>
<dbReference type="HAMAP" id="MF_00505">
    <property type="entry name" value="HSP90"/>
    <property type="match status" value="1"/>
</dbReference>
<dbReference type="InterPro" id="IPR036890">
    <property type="entry name" value="HATPase_C_sf"/>
</dbReference>
<dbReference type="InterPro" id="IPR019805">
    <property type="entry name" value="Heat_shock_protein_90_CS"/>
</dbReference>
<dbReference type="InterPro" id="IPR037196">
    <property type="entry name" value="HSP90_C"/>
</dbReference>
<dbReference type="InterPro" id="IPR001404">
    <property type="entry name" value="Hsp90_fam"/>
</dbReference>
<dbReference type="InterPro" id="IPR020575">
    <property type="entry name" value="Hsp90_N"/>
</dbReference>
<dbReference type="InterPro" id="IPR020568">
    <property type="entry name" value="Ribosomal_Su5_D2-typ_SF"/>
</dbReference>
<dbReference type="NCBIfam" id="NF003555">
    <property type="entry name" value="PRK05218.1"/>
    <property type="match status" value="1"/>
</dbReference>
<dbReference type="PANTHER" id="PTHR11528">
    <property type="entry name" value="HEAT SHOCK PROTEIN 90 FAMILY MEMBER"/>
    <property type="match status" value="1"/>
</dbReference>
<dbReference type="Pfam" id="PF13589">
    <property type="entry name" value="HATPase_c_3"/>
    <property type="match status" value="1"/>
</dbReference>
<dbReference type="Pfam" id="PF00183">
    <property type="entry name" value="HSP90"/>
    <property type="match status" value="1"/>
</dbReference>
<dbReference type="PIRSF" id="PIRSF002583">
    <property type="entry name" value="Hsp90"/>
    <property type="match status" value="1"/>
</dbReference>
<dbReference type="PRINTS" id="PR00775">
    <property type="entry name" value="HEATSHOCK90"/>
</dbReference>
<dbReference type="SUPFAM" id="SSF55874">
    <property type="entry name" value="ATPase domain of HSP90 chaperone/DNA topoisomerase II/histidine kinase"/>
    <property type="match status" value="1"/>
</dbReference>
<dbReference type="SUPFAM" id="SSF110942">
    <property type="entry name" value="HSP90 C-terminal domain"/>
    <property type="match status" value="1"/>
</dbReference>
<dbReference type="SUPFAM" id="SSF54211">
    <property type="entry name" value="Ribosomal protein S5 domain 2-like"/>
    <property type="match status" value="1"/>
</dbReference>
<dbReference type="PROSITE" id="PS00298">
    <property type="entry name" value="HSP90"/>
    <property type="match status" value="1"/>
</dbReference>
<sequence length="637" mass="72536">MQGTVNSERLKFDAEVGKVLKLVIHSLYTNKDIFLRELISNASDACDKLRYQSLSNQDLMDAGSELKIVISVDKDKNRLYISDNGIGMNREDLINNLGTIAHSGTQKFLDAINSGASSQQGVVELIGKFGVGFYSAFMVASEVIVESCKAGESVGYQWKSSGDGEFVISQLESDQVSRGTRITLALKPEECEFVDKFRIEHIVTTYSYHINYPVYFLNDKGEEERLNSEAAIWTKAKDEISAEEHQNFFRTVAHVGGEPWMILHNKNEGVIEYTNLLYIPSIKPFDLFHPDRKCSVKLYVNKVFITEDNVQIIPQYLRFLKGIIDSSDLPLNISRETLQNNKIIEKIKRSLVKRVLSELKKKAESNIEDYTKFWDNFGSVLKEGLCESMNTEFREELISVCRFYSTHSNDSLISLEDYIERMKPEQNNIYYLTGNDLDSIKKSPQLEGFVSRGIEVLLLVDPVDDFWTNVVTDYQKVPLRSVIRADEDLEKFSDVEKDDESKESQNEDAQSKEKVDKFISYAAQVLTNLVSNVRVSKKLTDSPVCLAVADGSMDIRMERFLREQKQLNYKSTKILEINSKHPIVSKMIDQYAENGENAVLCNMLHLLLGQACILEGEELQNVSDFAERMNNVLSQIN</sequence>
<name>HTPG_EHRRW</name>
<gene>
    <name evidence="1" type="primary">htpG</name>
    <name type="ordered locus">Erum2450</name>
    <name type="ordered locus">ERWE_CDS_02490</name>
</gene>
<keyword id="KW-0067">ATP-binding</keyword>
<keyword id="KW-0143">Chaperone</keyword>
<keyword id="KW-0963">Cytoplasm</keyword>
<keyword id="KW-0547">Nucleotide-binding</keyword>
<keyword id="KW-0346">Stress response</keyword>
<protein>
    <recommendedName>
        <fullName evidence="1">Chaperone protein HtpG</fullName>
    </recommendedName>
    <alternativeName>
        <fullName evidence="1">Heat shock protein HtpG</fullName>
    </alternativeName>
    <alternativeName>
        <fullName evidence="1">High temperature protein G</fullName>
    </alternativeName>
</protein>
<proteinExistence type="inferred from homology"/>
<comment type="function">
    <text evidence="1">Molecular chaperone. Has ATPase activity.</text>
</comment>
<comment type="subunit">
    <text evidence="1">Homodimer.</text>
</comment>
<comment type="subcellular location">
    <subcellularLocation>
        <location evidence="1">Cytoplasm</location>
    </subcellularLocation>
</comment>
<comment type="similarity">
    <text evidence="1">Belongs to the heat shock protein 90 family.</text>
</comment>
<accession>Q5HBT2</accession>
<accession>Q5FE32</accession>
<reference key="1">
    <citation type="journal article" date="2005" name="Proc. Natl. Acad. Sci. U.S.A.">
        <title>The genome of the heartwater agent Ehrlichia ruminantium contains multiple tandem repeats of actively variable copy number.</title>
        <authorList>
            <person name="Collins N.E."/>
            <person name="Liebenberg J."/>
            <person name="de Villiers E.P."/>
            <person name="Brayton K.A."/>
            <person name="Louw E."/>
            <person name="Pretorius A."/>
            <person name="Faber F.E."/>
            <person name="van Heerden H."/>
            <person name="Josemans A."/>
            <person name="van Kleef M."/>
            <person name="Steyn H.C."/>
            <person name="van Strijp M.F."/>
            <person name="Zweygarth E."/>
            <person name="Jongejan F."/>
            <person name="Maillard J.C."/>
            <person name="Berthier D."/>
            <person name="Botha M."/>
            <person name="Joubert F."/>
            <person name="Corton C.H."/>
            <person name="Thomson N.R."/>
            <person name="Allsopp M.T."/>
            <person name="Allsopp B.A."/>
        </authorList>
    </citation>
    <scope>NUCLEOTIDE SEQUENCE [LARGE SCALE GENOMIC DNA]</scope>
    <source>
        <strain>Welgevonden</strain>
    </source>
</reference>
<reference key="2">
    <citation type="journal article" date="2006" name="J. Bacteriol.">
        <title>Comparative genomic analysis of three strains of Ehrlichia ruminantium reveals an active process of genome size plasticity.</title>
        <authorList>
            <person name="Frutos R."/>
            <person name="Viari A."/>
            <person name="Ferraz C."/>
            <person name="Morgat A."/>
            <person name="Eychenie S."/>
            <person name="Kandassamy Y."/>
            <person name="Chantal I."/>
            <person name="Bensaid A."/>
            <person name="Coissac E."/>
            <person name="Vachiery N."/>
            <person name="Demaille J."/>
            <person name="Martinez D."/>
        </authorList>
    </citation>
    <scope>NUCLEOTIDE SEQUENCE [LARGE SCALE GENOMIC DNA]</scope>
    <source>
        <strain>Welgevonden</strain>
    </source>
</reference>
<evidence type="ECO:0000255" key="1">
    <source>
        <dbReference type="HAMAP-Rule" id="MF_00505"/>
    </source>
</evidence>
<organism>
    <name type="scientific">Ehrlichia ruminantium (strain Welgevonden)</name>
    <dbReference type="NCBI Taxonomy" id="254945"/>
    <lineage>
        <taxon>Bacteria</taxon>
        <taxon>Pseudomonadati</taxon>
        <taxon>Pseudomonadota</taxon>
        <taxon>Alphaproteobacteria</taxon>
        <taxon>Rickettsiales</taxon>
        <taxon>Anaplasmataceae</taxon>
        <taxon>Ehrlichia</taxon>
    </lineage>
</organism>
<feature type="chain" id="PRO_0000224206" description="Chaperone protein HtpG">
    <location>
        <begin position="1"/>
        <end position="637"/>
    </location>
</feature>
<feature type="region of interest" description="A; substrate-binding" evidence="1">
    <location>
        <begin position="1"/>
        <end position="335"/>
    </location>
</feature>
<feature type="region of interest" description="B" evidence="1">
    <location>
        <begin position="336"/>
        <end position="559"/>
    </location>
</feature>
<feature type="region of interest" description="C" evidence="1">
    <location>
        <begin position="560"/>
        <end position="637"/>
    </location>
</feature>